<organism>
    <name type="scientific">Shigella dysenteriae serotype 1 (strain Sd197)</name>
    <dbReference type="NCBI Taxonomy" id="300267"/>
    <lineage>
        <taxon>Bacteria</taxon>
        <taxon>Pseudomonadati</taxon>
        <taxon>Pseudomonadota</taxon>
        <taxon>Gammaproteobacteria</taxon>
        <taxon>Enterobacterales</taxon>
        <taxon>Enterobacteriaceae</taxon>
        <taxon>Shigella</taxon>
    </lineage>
</organism>
<accession>Q32CJ6</accession>
<gene>
    <name evidence="1" type="primary">mutS</name>
    <name type="ordered locus">SDY_2933</name>
</gene>
<proteinExistence type="inferred from homology"/>
<dbReference type="EMBL" id="CP000034">
    <property type="protein sequence ID" value="ABB62959.1"/>
    <property type="molecule type" value="Genomic_DNA"/>
</dbReference>
<dbReference type="RefSeq" id="WP_001272908.1">
    <property type="nucleotide sequence ID" value="NC_007606.1"/>
</dbReference>
<dbReference type="RefSeq" id="YP_404450.1">
    <property type="nucleotide sequence ID" value="NC_007606.1"/>
</dbReference>
<dbReference type="SMR" id="Q32CJ6"/>
<dbReference type="STRING" id="300267.SDY_2933"/>
<dbReference type="EnsemblBacteria" id="ABB62959">
    <property type="protein sequence ID" value="ABB62959"/>
    <property type="gene ID" value="SDY_2933"/>
</dbReference>
<dbReference type="KEGG" id="sdy:SDY_2933"/>
<dbReference type="PATRIC" id="fig|300267.13.peg.3524"/>
<dbReference type="HOGENOM" id="CLU_002472_4_0_6"/>
<dbReference type="Proteomes" id="UP000002716">
    <property type="component" value="Chromosome"/>
</dbReference>
<dbReference type="GO" id="GO:0005829">
    <property type="term" value="C:cytosol"/>
    <property type="evidence" value="ECO:0007669"/>
    <property type="project" value="TreeGrafter"/>
</dbReference>
<dbReference type="GO" id="GO:0005524">
    <property type="term" value="F:ATP binding"/>
    <property type="evidence" value="ECO:0007669"/>
    <property type="project" value="UniProtKB-UniRule"/>
</dbReference>
<dbReference type="GO" id="GO:0140664">
    <property type="term" value="F:ATP-dependent DNA damage sensor activity"/>
    <property type="evidence" value="ECO:0007669"/>
    <property type="project" value="InterPro"/>
</dbReference>
<dbReference type="GO" id="GO:0003684">
    <property type="term" value="F:damaged DNA binding"/>
    <property type="evidence" value="ECO:0007669"/>
    <property type="project" value="UniProtKB-UniRule"/>
</dbReference>
<dbReference type="GO" id="GO:0030983">
    <property type="term" value="F:mismatched DNA binding"/>
    <property type="evidence" value="ECO:0007669"/>
    <property type="project" value="InterPro"/>
</dbReference>
<dbReference type="GO" id="GO:0006298">
    <property type="term" value="P:mismatch repair"/>
    <property type="evidence" value="ECO:0007669"/>
    <property type="project" value="UniProtKB-UniRule"/>
</dbReference>
<dbReference type="CDD" id="cd03284">
    <property type="entry name" value="ABC_MutS1"/>
    <property type="match status" value="1"/>
</dbReference>
<dbReference type="FunFam" id="1.10.1420.10:FF:000002">
    <property type="entry name" value="DNA mismatch repair protein MutS"/>
    <property type="match status" value="1"/>
</dbReference>
<dbReference type="FunFam" id="3.30.420.110:FF:000001">
    <property type="entry name" value="DNA mismatch repair protein MutS"/>
    <property type="match status" value="1"/>
</dbReference>
<dbReference type="FunFam" id="3.40.1170.10:FF:000001">
    <property type="entry name" value="DNA mismatch repair protein MutS"/>
    <property type="match status" value="1"/>
</dbReference>
<dbReference type="FunFam" id="3.40.50.300:FF:000283">
    <property type="entry name" value="DNA mismatch repair protein MutS"/>
    <property type="match status" value="1"/>
</dbReference>
<dbReference type="Gene3D" id="1.10.1420.10">
    <property type="match status" value="2"/>
</dbReference>
<dbReference type="Gene3D" id="6.10.140.430">
    <property type="match status" value="1"/>
</dbReference>
<dbReference type="Gene3D" id="3.40.1170.10">
    <property type="entry name" value="DNA repair protein MutS, domain I"/>
    <property type="match status" value="1"/>
</dbReference>
<dbReference type="Gene3D" id="3.30.420.110">
    <property type="entry name" value="MutS, connector domain"/>
    <property type="match status" value="1"/>
</dbReference>
<dbReference type="Gene3D" id="3.40.50.300">
    <property type="entry name" value="P-loop containing nucleotide triphosphate hydrolases"/>
    <property type="match status" value="1"/>
</dbReference>
<dbReference type="HAMAP" id="MF_00096">
    <property type="entry name" value="MutS"/>
    <property type="match status" value="1"/>
</dbReference>
<dbReference type="InterPro" id="IPR005748">
    <property type="entry name" value="DNA_mismatch_repair_MutS"/>
</dbReference>
<dbReference type="InterPro" id="IPR007695">
    <property type="entry name" value="DNA_mismatch_repair_MutS-lik_N"/>
</dbReference>
<dbReference type="InterPro" id="IPR017261">
    <property type="entry name" value="DNA_mismatch_repair_MutS/MSH"/>
</dbReference>
<dbReference type="InterPro" id="IPR000432">
    <property type="entry name" value="DNA_mismatch_repair_MutS_C"/>
</dbReference>
<dbReference type="InterPro" id="IPR007861">
    <property type="entry name" value="DNA_mismatch_repair_MutS_clamp"/>
</dbReference>
<dbReference type="InterPro" id="IPR007696">
    <property type="entry name" value="DNA_mismatch_repair_MutS_core"/>
</dbReference>
<dbReference type="InterPro" id="IPR016151">
    <property type="entry name" value="DNA_mismatch_repair_MutS_N"/>
</dbReference>
<dbReference type="InterPro" id="IPR036187">
    <property type="entry name" value="DNA_mismatch_repair_MutS_sf"/>
</dbReference>
<dbReference type="InterPro" id="IPR007860">
    <property type="entry name" value="DNA_mmatch_repair_MutS_con_dom"/>
</dbReference>
<dbReference type="InterPro" id="IPR045076">
    <property type="entry name" value="MutS"/>
</dbReference>
<dbReference type="InterPro" id="IPR036678">
    <property type="entry name" value="MutS_con_dom_sf"/>
</dbReference>
<dbReference type="InterPro" id="IPR027417">
    <property type="entry name" value="P-loop_NTPase"/>
</dbReference>
<dbReference type="NCBIfam" id="TIGR01070">
    <property type="entry name" value="mutS1"/>
    <property type="match status" value="1"/>
</dbReference>
<dbReference type="NCBIfam" id="NF003810">
    <property type="entry name" value="PRK05399.1"/>
    <property type="match status" value="1"/>
</dbReference>
<dbReference type="PANTHER" id="PTHR11361:SF34">
    <property type="entry name" value="DNA MISMATCH REPAIR PROTEIN MSH1, MITOCHONDRIAL"/>
    <property type="match status" value="1"/>
</dbReference>
<dbReference type="PANTHER" id="PTHR11361">
    <property type="entry name" value="DNA MISMATCH REPAIR PROTEIN MUTS FAMILY MEMBER"/>
    <property type="match status" value="1"/>
</dbReference>
<dbReference type="Pfam" id="PF01624">
    <property type="entry name" value="MutS_I"/>
    <property type="match status" value="1"/>
</dbReference>
<dbReference type="Pfam" id="PF05188">
    <property type="entry name" value="MutS_II"/>
    <property type="match status" value="1"/>
</dbReference>
<dbReference type="Pfam" id="PF05192">
    <property type="entry name" value="MutS_III"/>
    <property type="match status" value="1"/>
</dbReference>
<dbReference type="Pfam" id="PF05190">
    <property type="entry name" value="MutS_IV"/>
    <property type="match status" value="1"/>
</dbReference>
<dbReference type="Pfam" id="PF00488">
    <property type="entry name" value="MutS_V"/>
    <property type="match status" value="1"/>
</dbReference>
<dbReference type="PIRSF" id="PIRSF037677">
    <property type="entry name" value="DNA_mis_repair_Msh6"/>
    <property type="match status" value="1"/>
</dbReference>
<dbReference type="SMART" id="SM00534">
    <property type="entry name" value="MUTSac"/>
    <property type="match status" value="1"/>
</dbReference>
<dbReference type="SMART" id="SM00533">
    <property type="entry name" value="MUTSd"/>
    <property type="match status" value="1"/>
</dbReference>
<dbReference type="SUPFAM" id="SSF55271">
    <property type="entry name" value="DNA repair protein MutS, domain I"/>
    <property type="match status" value="1"/>
</dbReference>
<dbReference type="SUPFAM" id="SSF53150">
    <property type="entry name" value="DNA repair protein MutS, domain II"/>
    <property type="match status" value="1"/>
</dbReference>
<dbReference type="SUPFAM" id="SSF48334">
    <property type="entry name" value="DNA repair protein MutS, domain III"/>
    <property type="match status" value="1"/>
</dbReference>
<dbReference type="SUPFAM" id="SSF52540">
    <property type="entry name" value="P-loop containing nucleoside triphosphate hydrolases"/>
    <property type="match status" value="1"/>
</dbReference>
<dbReference type="PROSITE" id="PS00486">
    <property type="entry name" value="DNA_MISMATCH_REPAIR_2"/>
    <property type="match status" value="1"/>
</dbReference>
<sequence>MSAIENFDAHTPMMQQYLKLKAQHPEILLFYRMGDFYELFYDDAKRASQLLDISLTKRGASAGEPIPMAGIPYHAVENYLAKLVNQGESVAICEQIGDPATSKGPVERKVVRIVTPGTISDEALLQERQDNLLAAIWQDSKGFGYATLDISSGRFRLSEPADRETMAAELQRTNPAELLYAEDFAEMSLIEGRRGLRRRPLWEFEIDTARQQLNLQFGTRDLVGFGVENAPRGLCAAGCLLQYAKDTQRTTLPHIRSITMEREQDSIIMDAATRRNLEITQNLAGGAENTLASVLDCTVTPMGSRMLKRWLHMPVRDTRVLLERQQTIGALQDFTAGLQPVLRQVGDLERILARLALRTARPRDLARMRHAFQQLPELRAQLETVDSAPVQALREKMGEFAELRDLLERAIIDTPPVLVRDGGVIASGYNEELDEWRALADGATDYLERLEVRERERTGLDTLKVGFNAVHGYYIQISRGQSHLAPINYMRRQTLKNAERYIIPELKEYEDKVLTSKGKALALEKQLYEELFDLLLPHLEALQQSASALAELDVLVNLAERAYTLNYTCPTFIDKQGIRITEGRHPVVERVLNEPFIANPLNLSPQRRMLIITGPNMGGKSTYMRQTALIALMAYIGSYVPAQKVEIGPIDRIFTRVGAADDLASGRSTFMVEMTETANILHNATEYSLVLMDEIGRGTSTYDGLSLAWACAENLANKIKALTLFATHYFELTQLPEKMEGIANVHLDALEHGDTIAFMHSVQDGAASKSYGLAVAALAGVPKEVIKRARQKLRELENISPNAAATQVDGTQMSLLSVPEETSPAVEALENLDPDSLTPRQALEWIYRLKSLV</sequence>
<feature type="chain" id="PRO_0000224404" description="DNA mismatch repair protein MutS">
    <location>
        <begin position="1"/>
        <end position="853"/>
    </location>
</feature>
<feature type="binding site" evidence="1">
    <location>
        <begin position="614"/>
        <end position="621"/>
    </location>
    <ligand>
        <name>ATP</name>
        <dbReference type="ChEBI" id="CHEBI:30616"/>
    </ligand>
</feature>
<evidence type="ECO:0000255" key="1">
    <source>
        <dbReference type="HAMAP-Rule" id="MF_00096"/>
    </source>
</evidence>
<name>MUTS_SHIDS</name>
<reference key="1">
    <citation type="journal article" date="2005" name="Nucleic Acids Res.">
        <title>Genome dynamics and diversity of Shigella species, the etiologic agents of bacillary dysentery.</title>
        <authorList>
            <person name="Yang F."/>
            <person name="Yang J."/>
            <person name="Zhang X."/>
            <person name="Chen L."/>
            <person name="Jiang Y."/>
            <person name="Yan Y."/>
            <person name="Tang X."/>
            <person name="Wang J."/>
            <person name="Xiong Z."/>
            <person name="Dong J."/>
            <person name="Xue Y."/>
            <person name="Zhu Y."/>
            <person name="Xu X."/>
            <person name="Sun L."/>
            <person name="Chen S."/>
            <person name="Nie H."/>
            <person name="Peng J."/>
            <person name="Xu J."/>
            <person name="Wang Y."/>
            <person name="Yuan Z."/>
            <person name="Wen Y."/>
            <person name="Yao Z."/>
            <person name="Shen Y."/>
            <person name="Qiang B."/>
            <person name="Hou Y."/>
            <person name="Yu J."/>
            <person name="Jin Q."/>
        </authorList>
    </citation>
    <scope>NUCLEOTIDE SEQUENCE [LARGE SCALE GENOMIC DNA]</scope>
    <source>
        <strain>Sd197</strain>
    </source>
</reference>
<protein>
    <recommendedName>
        <fullName evidence="1">DNA mismatch repair protein MutS</fullName>
    </recommendedName>
</protein>
<comment type="function">
    <text evidence="1">This protein is involved in the repair of mismatches in DNA. It is possible that it carries out the mismatch recognition step. This protein has a weak ATPase activity.</text>
</comment>
<comment type="similarity">
    <text evidence="1">Belongs to the DNA mismatch repair MutS family.</text>
</comment>
<keyword id="KW-0067">ATP-binding</keyword>
<keyword id="KW-0227">DNA damage</keyword>
<keyword id="KW-0234">DNA repair</keyword>
<keyword id="KW-0238">DNA-binding</keyword>
<keyword id="KW-0547">Nucleotide-binding</keyword>
<keyword id="KW-1185">Reference proteome</keyword>